<name>GMHA_ACTPJ</name>
<evidence type="ECO:0000255" key="1">
    <source>
        <dbReference type="HAMAP-Rule" id="MF_00067"/>
    </source>
</evidence>
<comment type="function">
    <text evidence="1">Catalyzes the isomerization of sedoheptulose 7-phosphate in D-glycero-D-manno-heptose 7-phosphate.</text>
</comment>
<comment type="catalytic activity">
    <reaction evidence="1">
        <text>2 D-sedoheptulose 7-phosphate = D-glycero-alpha-D-manno-heptose 7-phosphate + D-glycero-beta-D-manno-heptose 7-phosphate</text>
        <dbReference type="Rhea" id="RHEA:27489"/>
        <dbReference type="ChEBI" id="CHEBI:57483"/>
        <dbReference type="ChEBI" id="CHEBI:60203"/>
        <dbReference type="ChEBI" id="CHEBI:60204"/>
        <dbReference type="EC" id="5.3.1.28"/>
    </reaction>
</comment>
<comment type="cofactor">
    <cofactor evidence="1">
        <name>Zn(2+)</name>
        <dbReference type="ChEBI" id="CHEBI:29105"/>
    </cofactor>
    <text evidence="1">Binds 1 zinc ion per subunit.</text>
</comment>
<comment type="pathway">
    <text evidence="1">Carbohydrate biosynthesis; D-glycero-D-manno-heptose 7-phosphate biosynthesis; D-glycero-alpha-D-manno-heptose 7-phosphate and D-glycero-beta-D-manno-heptose 7-phosphate from sedoheptulose 7-phosphate: step 1/1.</text>
</comment>
<comment type="subunit">
    <text evidence="1">Homotetramer.</text>
</comment>
<comment type="subcellular location">
    <subcellularLocation>
        <location evidence="1">Cytoplasm</location>
    </subcellularLocation>
</comment>
<comment type="miscellaneous">
    <text evidence="1">The reaction produces a racemic mixture of D-glycero-alpha-D-manno-heptose 7-phosphate and D-glycero-beta-D-manno-heptose 7-phosphate.</text>
</comment>
<comment type="similarity">
    <text evidence="1">Belongs to the SIS family. GmhA subfamily.</text>
</comment>
<keyword id="KW-0119">Carbohydrate metabolism</keyword>
<keyword id="KW-0963">Cytoplasm</keyword>
<keyword id="KW-0413">Isomerase</keyword>
<keyword id="KW-0479">Metal-binding</keyword>
<keyword id="KW-0862">Zinc</keyword>
<sequence>MYLAQIKAELQEAADVLDKFMSDEKNIQLIQDAALLISNSFKQGGKVLSCGNGGSHCDAMHFAEELTGRYRENRPGYPAIAISDVSHLSCVSNDFGYEYVFSRYLEAVGQKGDVLFGLSTSGNSKNVLNAIKVAKEKGMKVIAMTGKDGGQMAGLADVEIRVPHFRYADRTQEIHIKVIHILMMLIEFEMAKQA</sequence>
<accession>B0BP79</accession>
<gene>
    <name evidence="1" type="primary">gmhA</name>
    <name type="ordered locus">APJL_0804</name>
</gene>
<organism>
    <name type="scientific">Actinobacillus pleuropneumoniae serotype 3 (strain JL03)</name>
    <dbReference type="NCBI Taxonomy" id="434271"/>
    <lineage>
        <taxon>Bacteria</taxon>
        <taxon>Pseudomonadati</taxon>
        <taxon>Pseudomonadota</taxon>
        <taxon>Gammaproteobacteria</taxon>
        <taxon>Pasteurellales</taxon>
        <taxon>Pasteurellaceae</taxon>
        <taxon>Actinobacillus</taxon>
    </lineage>
</organism>
<reference key="1">
    <citation type="journal article" date="2008" name="PLoS ONE">
        <title>Genome biology of Actinobacillus pleuropneumoniae JL03, an isolate of serotype 3 prevalent in China.</title>
        <authorList>
            <person name="Xu Z."/>
            <person name="Zhou Y."/>
            <person name="Li L."/>
            <person name="Zhou R."/>
            <person name="Xiao S."/>
            <person name="Wan Y."/>
            <person name="Zhang S."/>
            <person name="Wang K."/>
            <person name="Li W."/>
            <person name="Li L."/>
            <person name="Jin H."/>
            <person name="Kang M."/>
            <person name="Dalai B."/>
            <person name="Li T."/>
            <person name="Liu L."/>
            <person name="Cheng Y."/>
            <person name="Zhang L."/>
            <person name="Xu T."/>
            <person name="Zheng H."/>
            <person name="Pu S."/>
            <person name="Wang B."/>
            <person name="Gu W."/>
            <person name="Zhang X.L."/>
            <person name="Zhu G.-F."/>
            <person name="Wang S."/>
            <person name="Zhao G.-P."/>
            <person name="Chen H."/>
        </authorList>
    </citation>
    <scope>NUCLEOTIDE SEQUENCE [LARGE SCALE GENOMIC DNA]</scope>
    <source>
        <strain>JL03</strain>
    </source>
</reference>
<proteinExistence type="inferred from homology"/>
<protein>
    <recommendedName>
        <fullName evidence="1">Phosphoheptose isomerase</fullName>
        <ecNumber evidence="1">5.3.1.28</ecNumber>
    </recommendedName>
    <alternativeName>
        <fullName evidence="1">Sedoheptulose 7-phosphate isomerase</fullName>
    </alternativeName>
</protein>
<feature type="chain" id="PRO_1000092263" description="Phosphoheptose isomerase">
    <location>
        <begin position="1"/>
        <end position="194"/>
    </location>
</feature>
<feature type="domain" description="SIS" evidence="1">
    <location>
        <begin position="37"/>
        <end position="194"/>
    </location>
</feature>
<feature type="binding site" evidence="1">
    <location>
        <begin position="52"/>
        <end position="54"/>
    </location>
    <ligand>
        <name>substrate</name>
    </ligand>
</feature>
<feature type="binding site" evidence="1">
    <location>
        <position position="61"/>
    </location>
    <ligand>
        <name>Zn(2+)</name>
        <dbReference type="ChEBI" id="CHEBI:29105"/>
    </ligand>
</feature>
<feature type="binding site" evidence="1">
    <location>
        <position position="65"/>
    </location>
    <ligand>
        <name>substrate</name>
    </ligand>
</feature>
<feature type="binding site" evidence="1">
    <location>
        <position position="65"/>
    </location>
    <ligand>
        <name>Zn(2+)</name>
        <dbReference type="ChEBI" id="CHEBI:29105"/>
    </ligand>
</feature>
<feature type="binding site" evidence="1">
    <location>
        <begin position="93"/>
        <end position="94"/>
    </location>
    <ligand>
        <name>substrate</name>
    </ligand>
</feature>
<feature type="binding site" evidence="1">
    <location>
        <begin position="119"/>
        <end position="121"/>
    </location>
    <ligand>
        <name>substrate</name>
    </ligand>
</feature>
<feature type="binding site" evidence="1">
    <location>
        <position position="124"/>
    </location>
    <ligand>
        <name>substrate</name>
    </ligand>
</feature>
<feature type="binding site" evidence="1">
    <location>
        <position position="172"/>
    </location>
    <ligand>
        <name>substrate</name>
    </ligand>
</feature>
<feature type="binding site" evidence="1">
    <location>
        <position position="172"/>
    </location>
    <ligand>
        <name>Zn(2+)</name>
        <dbReference type="ChEBI" id="CHEBI:29105"/>
    </ligand>
</feature>
<feature type="binding site" evidence="1">
    <location>
        <position position="180"/>
    </location>
    <ligand>
        <name>Zn(2+)</name>
        <dbReference type="ChEBI" id="CHEBI:29105"/>
    </ligand>
</feature>
<dbReference type="EC" id="5.3.1.28" evidence="1"/>
<dbReference type="EMBL" id="CP000687">
    <property type="protein sequence ID" value="ABY69364.1"/>
    <property type="molecule type" value="Genomic_DNA"/>
</dbReference>
<dbReference type="SMR" id="B0BP79"/>
<dbReference type="KEGG" id="apj:APJL_0804"/>
<dbReference type="HOGENOM" id="CLU_080999_4_0_6"/>
<dbReference type="UniPathway" id="UPA00041">
    <property type="reaction ID" value="UER00436"/>
</dbReference>
<dbReference type="Proteomes" id="UP000008547">
    <property type="component" value="Chromosome"/>
</dbReference>
<dbReference type="GO" id="GO:0005737">
    <property type="term" value="C:cytoplasm"/>
    <property type="evidence" value="ECO:0007669"/>
    <property type="project" value="UniProtKB-SubCell"/>
</dbReference>
<dbReference type="GO" id="GO:0097367">
    <property type="term" value="F:carbohydrate derivative binding"/>
    <property type="evidence" value="ECO:0007669"/>
    <property type="project" value="InterPro"/>
</dbReference>
<dbReference type="GO" id="GO:0008968">
    <property type="term" value="F:D-sedoheptulose 7-phosphate isomerase activity"/>
    <property type="evidence" value="ECO:0007669"/>
    <property type="project" value="UniProtKB-UniRule"/>
</dbReference>
<dbReference type="GO" id="GO:0008270">
    <property type="term" value="F:zinc ion binding"/>
    <property type="evidence" value="ECO:0007669"/>
    <property type="project" value="UniProtKB-UniRule"/>
</dbReference>
<dbReference type="GO" id="GO:0005975">
    <property type="term" value="P:carbohydrate metabolic process"/>
    <property type="evidence" value="ECO:0007669"/>
    <property type="project" value="UniProtKB-UniRule"/>
</dbReference>
<dbReference type="GO" id="GO:2001061">
    <property type="term" value="P:D-glycero-D-manno-heptose 7-phosphate biosynthetic process"/>
    <property type="evidence" value="ECO:0007669"/>
    <property type="project" value="UniProtKB-UniPathway"/>
</dbReference>
<dbReference type="CDD" id="cd05006">
    <property type="entry name" value="SIS_GmhA"/>
    <property type="match status" value="1"/>
</dbReference>
<dbReference type="Gene3D" id="3.40.50.10490">
    <property type="entry name" value="Glucose-6-phosphate isomerase like protein, domain 1"/>
    <property type="match status" value="1"/>
</dbReference>
<dbReference type="HAMAP" id="MF_00067">
    <property type="entry name" value="GmhA"/>
    <property type="match status" value="1"/>
</dbReference>
<dbReference type="InterPro" id="IPR035461">
    <property type="entry name" value="GmhA/DiaA"/>
</dbReference>
<dbReference type="InterPro" id="IPR004515">
    <property type="entry name" value="Phosphoheptose_Isoase"/>
</dbReference>
<dbReference type="InterPro" id="IPR001347">
    <property type="entry name" value="SIS_dom"/>
</dbReference>
<dbReference type="InterPro" id="IPR046348">
    <property type="entry name" value="SIS_dom_sf"/>
</dbReference>
<dbReference type="InterPro" id="IPR050099">
    <property type="entry name" value="SIS_GmhA/DiaA_subfam"/>
</dbReference>
<dbReference type="NCBIfam" id="TIGR00441">
    <property type="entry name" value="gmhA"/>
    <property type="match status" value="1"/>
</dbReference>
<dbReference type="NCBIfam" id="NF001628">
    <property type="entry name" value="PRK00414.1"/>
    <property type="match status" value="1"/>
</dbReference>
<dbReference type="PANTHER" id="PTHR30390:SF7">
    <property type="entry name" value="PHOSPHOHEPTOSE ISOMERASE"/>
    <property type="match status" value="1"/>
</dbReference>
<dbReference type="PANTHER" id="PTHR30390">
    <property type="entry name" value="SEDOHEPTULOSE 7-PHOSPHATE ISOMERASE / DNAA INITIATOR-ASSOCIATING FACTOR FOR REPLICATION INITIATION"/>
    <property type="match status" value="1"/>
</dbReference>
<dbReference type="Pfam" id="PF13580">
    <property type="entry name" value="SIS_2"/>
    <property type="match status" value="1"/>
</dbReference>
<dbReference type="SUPFAM" id="SSF53697">
    <property type="entry name" value="SIS domain"/>
    <property type="match status" value="1"/>
</dbReference>
<dbReference type="PROSITE" id="PS51464">
    <property type="entry name" value="SIS"/>
    <property type="match status" value="1"/>
</dbReference>